<proteinExistence type="inferred from homology"/>
<sequence length="125" mass="13822">MSTAVTEGIEVTVRSTFRPERSEPGRFLFSYTVRIANQGEVPAQLVSRRWIILDANGEREEVVGDGVVGQQPHLEPGEHFEYTSFCVLKTPHGSMRGTYRMVRDGGQAFDATIAPFPLVVPGTLN</sequence>
<evidence type="ECO:0000255" key="1">
    <source>
        <dbReference type="HAMAP-Rule" id="MF_00791"/>
    </source>
</evidence>
<name>APAG_ANASK</name>
<gene>
    <name evidence="1" type="primary">apaG</name>
    <name type="ordered locus">AnaeK_4147</name>
</gene>
<dbReference type="EMBL" id="CP001131">
    <property type="protein sequence ID" value="ACG75350.1"/>
    <property type="molecule type" value="Genomic_DNA"/>
</dbReference>
<dbReference type="RefSeq" id="WP_012528103.1">
    <property type="nucleotide sequence ID" value="NC_011145.1"/>
</dbReference>
<dbReference type="SMR" id="B4UHA8"/>
<dbReference type="KEGG" id="ank:AnaeK_4147"/>
<dbReference type="HOGENOM" id="CLU_128074_1_0_7"/>
<dbReference type="OrthoDB" id="9795226at2"/>
<dbReference type="Proteomes" id="UP000001871">
    <property type="component" value="Chromosome"/>
</dbReference>
<dbReference type="Gene3D" id="2.60.40.1470">
    <property type="entry name" value="ApaG domain"/>
    <property type="match status" value="1"/>
</dbReference>
<dbReference type="HAMAP" id="MF_00791">
    <property type="entry name" value="ApaG"/>
    <property type="match status" value="1"/>
</dbReference>
<dbReference type="InterPro" id="IPR050718">
    <property type="entry name" value="ApaG-like"/>
</dbReference>
<dbReference type="InterPro" id="IPR007474">
    <property type="entry name" value="ApaG_domain"/>
</dbReference>
<dbReference type="InterPro" id="IPR036767">
    <property type="entry name" value="ApaG_sf"/>
</dbReference>
<dbReference type="InterPro" id="IPR023065">
    <property type="entry name" value="Uncharacterised_ApaG"/>
</dbReference>
<dbReference type="NCBIfam" id="NF003967">
    <property type="entry name" value="PRK05461.1"/>
    <property type="match status" value="1"/>
</dbReference>
<dbReference type="PANTHER" id="PTHR47191">
    <property type="entry name" value="OS05G0170800 PROTEIN"/>
    <property type="match status" value="1"/>
</dbReference>
<dbReference type="PANTHER" id="PTHR47191:SF2">
    <property type="entry name" value="OS05G0170800 PROTEIN"/>
    <property type="match status" value="1"/>
</dbReference>
<dbReference type="Pfam" id="PF04379">
    <property type="entry name" value="DUF525"/>
    <property type="match status" value="1"/>
</dbReference>
<dbReference type="SUPFAM" id="SSF110069">
    <property type="entry name" value="ApaG-like"/>
    <property type="match status" value="1"/>
</dbReference>
<dbReference type="PROSITE" id="PS51087">
    <property type="entry name" value="APAG"/>
    <property type="match status" value="1"/>
</dbReference>
<organism>
    <name type="scientific">Anaeromyxobacter sp. (strain K)</name>
    <dbReference type="NCBI Taxonomy" id="447217"/>
    <lineage>
        <taxon>Bacteria</taxon>
        <taxon>Pseudomonadati</taxon>
        <taxon>Myxococcota</taxon>
        <taxon>Myxococcia</taxon>
        <taxon>Myxococcales</taxon>
        <taxon>Cystobacterineae</taxon>
        <taxon>Anaeromyxobacteraceae</taxon>
        <taxon>Anaeromyxobacter</taxon>
    </lineage>
</organism>
<reference key="1">
    <citation type="submission" date="2008-08" db="EMBL/GenBank/DDBJ databases">
        <title>Complete sequence of Anaeromyxobacter sp. K.</title>
        <authorList>
            <consortium name="US DOE Joint Genome Institute"/>
            <person name="Lucas S."/>
            <person name="Copeland A."/>
            <person name="Lapidus A."/>
            <person name="Glavina del Rio T."/>
            <person name="Dalin E."/>
            <person name="Tice H."/>
            <person name="Bruce D."/>
            <person name="Goodwin L."/>
            <person name="Pitluck S."/>
            <person name="Saunders E."/>
            <person name="Brettin T."/>
            <person name="Detter J.C."/>
            <person name="Han C."/>
            <person name="Larimer F."/>
            <person name="Land M."/>
            <person name="Hauser L."/>
            <person name="Kyrpides N."/>
            <person name="Ovchinnikiva G."/>
            <person name="Beliaev A."/>
        </authorList>
    </citation>
    <scope>NUCLEOTIDE SEQUENCE [LARGE SCALE GENOMIC DNA]</scope>
    <source>
        <strain>K</strain>
    </source>
</reference>
<protein>
    <recommendedName>
        <fullName evidence="1">Protein ApaG</fullName>
    </recommendedName>
</protein>
<accession>B4UHA8</accession>
<feature type="chain" id="PRO_1000133780" description="Protein ApaG">
    <location>
        <begin position="1"/>
        <end position="125"/>
    </location>
</feature>
<feature type="domain" description="ApaG" evidence="1">
    <location>
        <begin position="3"/>
        <end position="125"/>
    </location>
</feature>